<protein>
    <recommendedName>
        <fullName evidence="1">Biosynthetic peptidoglycan transglycosylase</fullName>
        <ecNumber evidence="1">2.4.99.28</ecNumber>
    </recommendedName>
    <alternativeName>
        <fullName evidence="1">Glycan polymerase</fullName>
    </alternativeName>
    <alternativeName>
        <fullName evidence="1">Peptidoglycan glycosyltransferase MtgA</fullName>
        <shortName evidence="1">PGT</shortName>
    </alternativeName>
</protein>
<name>MTGA_BORPE</name>
<sequence>MPKPTARRLNWFRVITAVIMAVLCIAILYQLWMFSLVVWYAYRDPGSSAIMRQELARLRERDPEAELKYQWVPYDRISNTLKQAVVASEDANFTEHDGVEWDAIRKAWEYNQRQAERGRTKMRGGSTITQQLAKNLFLSGSRSYLRKGQELVLAYMIEHVMPKERILELYLNVAEWGVGVFGAEAAARHYYNTSAARLGAGQAARLAAMLPNPRYYDRHRNTGYLNSRTATLTRRMRMVEIP</sequence>
<dbReference type="EC" id="2.4.99.28" evidence="1"/>
<dbReference type="EMBL" id="BX640411">
    <property type="protein sequence ID" value="CAE40703.1"/>
    <property type="molecule type" value="Genomic_DNA"/>
</dbReference>
<dbReference type="RefSeq" id="NP_879201.1">
    <property type="nucleotide sequence ID" value="NC_002929.2"/>
</dbReference>
<dbReference type="RefSeq" id="WP_003814960.1">
    <property type="nucleotide sequence ID" value="NZ_CP039022.1"/>
</dbReference>
<dbReference type="SMR" id="Q7W039"/>
<dbReference type="STRING" id="257313.BP0326"/>
<dbReference type="CAZy" id="GT51">
    <property type="family name" value="Glycosyltransferase Family 51"/>
</dbReference>
<dbReference type="PaxDb" id="257313-BP0326"/>
<dbReference type="GeneID" id="93205724"/>
<dbReference type="KEGG" id="bpe:BP0326"/>
<dbReference type="PATRIC" id="fig|257313.5.peg.353"/>
<dbReference type="eggNOG" id="COG0744">
    <property type="taxonomic scope" value="Bacteria"/>
</dbReference>
<dbReference type="HOGENOM" id="CLU_006354_1_0_4"/>
<dbReference type="UniPathway" id="UPA00219"/>
<dbReference type="Proteomes" id="UP000002676">
    <property type="component" value="Chromosome"/>
</dbReference>
<dbReference type="GO" id="GO:0009274">
    <property type="term" value="C:peptidoglycan-based cell wall"/>
    <property type="evidence" value="ECO:0007669"/>
    <property type="project" value="InterPro"/>
</dbReference>
<dbReference type="GO" id="GO:0005886">
    <property type="term" value="C:plasma membrane"/>
    <property type="evidence" value="ECO:0007669"/>
    <property type="project" value="UniProtKB-SubCell"/>
</dbReference>
<dbReference type="GO" id="GO:0016763">
    <property type="term" value="F:pentosyltransferase activity"/>
    <property type="evidence" value="ECO:0007669"/>
    <property type="project" value="InterPro"/>
</dbReference>
<dbReference type="GO" id="GO:0008955">
    <property type="term" value="F:peptidoglycan glycosyltransferase activity"/>
    <property type="evidence" value="ECO:0007669"/>
    <property type="project" value="UniProtKB-UniRule"/>
</dbReference>
<dbReference type="GO" id="GO:0071555">
    <property type="term" value="P:cell wall organization"/>
    <property type="evidence" value="ECO:0007669"/>
    <property type="project" value="UniProtKB-KW"/>
</dbReference>
<dbReference type="GO" id="GO:0009252">
    <property type="term" value="P:peptidoglycan biosynthetic process"/>
    <property type="evidence" value="ECO:0007669"/>
    <property type="project" value="UniProtKB-UniRule"/>
</dbReference>
<dbReference type="GO" id="GO:0008360">
    <property type="term" value="P:regulation of cell shape"/>
    <property type="evidence" value="ECO:0007669"/>
    <property type="project" value="UniProtKB-KW"/>
</dbReference>
<dbReference type="Gene3D" id="1.10.3810.10">
    <property type="entry name" value="Biosynthetic peptidoglycan transglycosylase-like"/>
    <property type="match status" value="1"/>
</dbReference>
<dbReference type="HAMAP" id="MF_00766">
    <property type="entry name" value="PGT_MtgA"/>
    <property type="match status" value="1"/>
</dbReference>
<dbReference type="InterPro" id="IPR001264">
    <property type="entry name" value="Glyco_trans_51"/>
</dbReference>
<dbReference type="InterPro" id="IPR023346">
    <property type="entry name" value="Lysozyme-like_dom_sf"/>
</dbReference>
<dbReference type="InterPro" id="IPR036950">
    <property type="entry name" value="PBP_transglycosylase"/>
</dbReference>
<dbReference type="InterPro" id="IPR011812">
    <property type="entry name" value="Pep_trsgly"/>
</dbReference>
<dbReference type="NCBIfam" id="TIGR02070">
    <property type="entry name" value="mono_pep_trsgly"/>
    <property type="match status" value="1"/>
</dbReference>
<dbReference type="PANTHER" id="PTHR30400:SF0">
    <property type="entry name" value="BIOSYNTHETIC PEPTIDOGLYCAN TRANSGLYCOSYLASE"/>
    <property type="match status" value="1"/>
</dbReference>
<dbReference type="PANTHER" id="PTHR30400">
    <property type="entry name" value="MONOFUNCTIONAL BIOSYNTHETIC PEPTIDOGLYCAN TRANSGLYCOSYLASE"/>
    <property type="match status" value="1"/>
</dbReference>
<dbReference type="Pfam" id="PF00912">
    <property type="entry name" value="Transgly"/>
    <property type="match status" value="1"/>
</dbReference>
<dbReference type="SUPFAM" id="SSF53955">
    <property type="entry name" value="Lysozyme-like"/>
    <property type="match status" value="1"/>
</dbReference>
<organism>
    <name type="scientific">Bordetella pertussis (strain Tohama I / ATCC BAA-589 / NCTC 13251)</name>
    <dbReference type="NCBI Taxonomy" id="257313"/>
    <lineage>
        <taxon>Bacteria</taxon>
        <taxon>Pseudomonadati</taxon>
        <taxon>Pseudomonadota</taxon>
        <taxon>Betaproteobacteria</taxon>
        <taxon>Burkholderiales</taxon>
        <taxon>Alcaligenaceae</taxon>
        <taxon>Bordetella</taxon>
    </lineage>
</organism>
<accession>Q7W039</accession>
<gene>
    <name evidence="1" type="primary">mtgA</name>
    <name type="ordered locus">BP0326</name>
</gene>
<feature type="chain" id="PRO_0000083119" description="Biosynthetic peptidoglycan transglycosylase">
    <location>
        <begin position="1"/>
        <end position="242"/>
    </location>
</feature>
<feature type="transmembrane region" description="Helical" evidence="1">
    <location>
        <begin position="18"/>
        <end position="38"/>
    </location>
</feature>
<comment type="function">
    <text evidence="1">Peptidoglycan polymerase that catalyzes glycan chain elongation from lipid-linked precursors.</text>
</comment>
<comment type="catalytic activity">
    <reaction evidence="1">
        <text>[GlcNAc-(1-&gt;4)-Mur2Ac(oyl-L-Ala-gamma-D-Glu-L-Lys-D-Ala-D-Ala)](n)-di-trans,octa-cis-undecaprenyl diphosphate + beta-D-GlcNAc-(1-&gt;4)-Mur2Ac(oyl-L-Ala-gamma-D-Glu-L-Lys-D-Ala-D-Ala)-di-trans,octa-cis-undecaprenyl diphosphate = [GlcNAc-(1-&gt;4)-Mur2Ac(oyl-L-Ala-gamma-D-Glu-L-Lys-D-Ala-D-Ala)](n+1)-di-trans,octa-cis-undecaprenyl diphosphate + di-trans,octa-cis-undecaprenyl diphosphate + H(+)</text>
        <dbReference type="Rhea" id="RHEA:23708"/>
        <dbReference type="Rhea" id="RHEA-COMP:9602"/>
        <dbReference type="Rhea" id="RHEA-COMP:9603"/>
        <dbReference type="ChEBI" id="CHEBI:15378"/>
        <dbReference type="ChEBI" id="CHEBI:58405"/>
        <dbReference type="ChEBI" id="CHEBI:60033"/>
        <dbReference type="ChEBI" id="CHEBI:78435"/>
        <dbReference type="EC" id="2.4.99.28"/>
    </reaction>
</comment>
<comment type="pathway">
    <text evidence="1">Cell wall biogenesis; peptidoglycan biosynthesis.</text>
</comment>
<comment type="subcellular location">
    <subcellularLocation>
        <location evidence="1">Cell inner membrane</location>
        <topology evidence="1">Single-pass membrane protein</topology>
    </subcellularLocation>
</comment>
<comment type="similarity">
    <text evidence="1">Belongs to the glycosyltransferase 51 family.</text>
</comment>
<proteinExistence type="inferred from homology"/>
<keyword id="KW-0997">Cell inner membrane</keyword>
<keyword id="KW-1003">Cell membrane</keyword>
<keyword id="KW-0133">Cell shape</keyword>
<keyword id="KW-0961">Cell wall biogenesis/degradation</keyword>
<keyword id="KW-0328">Glycosyltransferase</keyword>
<keyword id="KW-0472">Membrane</keyword>
<keyword id="KW-0573">Peptidoglycan synthesis</keyword>
<keyword id="KW-1185">Reference proteome</keyword>
<keyword id="KW-0808">Transferase</keyword>
<keyword id="KW-0812">Transmembrane</keyword>
<keyword id="KW-1133">Transmembrane helix</keyword>
<evidence type="ECO:0000255" key="1">
    <source>
        <dbReference type="HAMAP-Rule" id="MF_00766"/>
    </source>
</evidence>
<reference key="1">
    <citation type="journal article" date="2003" name="Nat. Genet.">
        <title>Comparative analysis of the genome sequences of Bordetella pertussis, Bordetella parapertussis and Bordetella bronchiseptica.</title>
        <authorList>
            <person name="Parkhill J."/>
            <person name="Sebaihia M."/>
            <person name="Preston A."/>
            <person name="Murphy L.D."/>
            <person name="Thomson N.R."/>
            <person name="Harris D.E."/>
            <person name="Holden M.T.G."/>
            <person name="Churcher C.M."/>
            <person name="Bentley S.D."/>
            <person name="Mungall K.L."/>
            <person name="Cerdeno-Tarraga A.-M."/>
            <person name="Temple L."/>
            <person name="James K.D."/>
            <person name="Harris B."/>
            <person name="Quail M.A."/>
            <person name="Achtman M."/>
            <person name="Atkin R."/>
            <person name="Baker S."/>
            <person name="Basham D."/>
            <person name="Bason N."/>
            <person name="Cherevach I."/>
            <person name="Chillingworth T."/>
            <person name="Collins M."/>
            <person name="Cronin A."/>
            <person name="Davis P."/>
            <person name="Doggett J."/>
            <person name="Feltwell T."/>
            <person name="Goble A."/>
            <person name="Hamlin N."/>
            <person name="Hauser H."/>
            <person name="Holroyd S."/>
            <person name="Jagels K."/>
            <person name="Leather S."/>
            <person name="Moule S."/>
            <person name="Norberczak H."/>
            <person name="O'Neil S."/>
            <person name="Ormond D."/>
            <person name="Price C."/>
            <person name="Rabbinowitsch E."/>
            <person name="Rutter S."/>
            <person name="Sanders M."/>
            <person name="Saunders D."/>
            <person name="Seeger K."/>
            <person name="Sharp S."/>
            <person name="Simmonds M."/>
            <person name="Skelton J."/>
            <person name="Squares R."/>
            <person name="Squares S."/>
            <person name="Stevens K."/>
            <person name="Unwin L."/>
            <person name="Whitehead S."/>
            <person name="Barrell B.G."/>
            <person name="Maskell D.J."/>
        </authorList>
    </citation>
    <scope>NUCLEOTIDE SEQUENCE [LARGE SCALE GENOMIC DNA]</scope>
    <source>
        <strain>Tohama I / ATCC BAA-589 / NCTC 13251</strain>
    </source>
</reference>